<reference key="1">
    <citation type="journal article" date="1997" name="Insect Biochem. Mol. Biol.">
        <title>Cuticular proteins from the giant cockroach, Blaberus craniifer.</title>
        <authorList>
            <person name="Jensen U.G."/>
            <person name="Rothmann A."/>
            <person name="Skou L."/>
            <person name="Andersen S.O."/>
            <person name="Roepstorff P."/>
            <person name="Hoejrup P."/>
        </authorList>
    </citation>
    <scope>PROTEIN SEQUENCE</scope>
    <scope>PYROGLUTAMATE FORMATION AT GLN-1</scope>
    <source>
        <tissue>Polyric caeca</tissue>
    </source>
</reference>
<sequence length="87" mass="9134">QADKYPAGLNPALCPNYPNCDNALIALYSNVAPAIPYAAAYNYPAGVSPAACPNYPFCGAIAPLGYHVREYPAGVHPAACPNYPYCV</sequence>
<evidence type="ECO:0000269" key="1">
    <source>
    </source>
</evidence>
<proteinExistence type="evidence at protein level"/>
<dbReference type="GO" id="GO:0042302">
    <property type="term" value="F:structural constituent of cuticle"/>
    <property type="evidence" value="ECO:0007669"/>
    <property type="project" value="UniProtKB-KW"/>
</dbReference>
<dbReference type="InterPro" id="IPR033778">
    <property type="entry name" value="CPCFC"/>
</dbReference>
<dbReference type="Pfam" id="PF17223">
    <property type="entry name" value="CPCFC"/>
    <property type="match status" value="3"/>
</dbReference>
<accession>P80674</accession>
<protein>
    <recommendedName>
        <fullName>Cuticle protein 1</fullName>
    </recommendedName>
    <alternativeName>
        <fullName>Bc-NCP1</fullName>
    </alternativeName>
</protein>
<keyword id="KW-0193">Cuticle</keyword>
<keyword id="KW-0903">Direct protein sequencing</keyword>
<keyword id="KW-1015">Disulfide bond</keyword>
<keyword id="KW-0873">Pyrrolidone carboxylic acid</keyword>
<keyword id="KW-0677">Repeat</keyword>
<name>CU01_BLACR</name>
<feature type="chain" id="PRO_0000196138" description="Cuticle protein 1">
    <location>
        <begin position="1"/>
        <end position="87"/>
    </location>
</feature>
<feature type="repeat" description="1">
    <location>
        <begin position="5"/>
        <end position="20"/>
    </location>
</feature>
<feature type="repeat" description="2">
    <location>
        <begin position="43"/>
        <end position="58"/>
    </location>
</feature>
<feature type="repeat" description="3">
    <location>
        <begin position="71"/>
        <end position="86"/>
    </location>
</feature>
<feature type="modified residue" description="Pyrrolidone carboxylic acid" evidence="1">
    <location>
        <position position="1"/>
    </location>
</feature>
<feature type="disulfide bond">
    <location>
        <begin position="14"/>
        <end position="20"/>
    </location>
</feature>
<feature type="disulfide bond">
    <location>
        <begin position="52"/>
        <end position="58"/>
    </location>
</feature>
<feature type="disulfide bond">
    <location>
        <begin position="80"/>
        <end position="86"/>
    </location>
</feature>
<organism>
    <name type="scientific">Blaberus craniifer</name>
    <name type="common">Death's head cockroach</name>
    <dbReference type="NCBI Taxonomy" id="6982"/>
    <lineage>
        <taxon>Eukaryota</taxon>
        <taxon>Metazoa</taxon>
        <taxon>Ecdysozoa</taxon>
        <taxon>Arthropoda</taxon>
        <taxon>Hexapoda</taxon>
        <taxon>Insecta</taxon>
        <taxon>Pterygota</taxon>
        <taxon>Neoptera</taxon>
        <taxon>Polyneoptera</taxon>
        <taxon>Dictyoptera</taxon>
        <taxon>Blattodea</taxon>
        <taxon>Blaberoidea</taxon>
        <taxon>Blaberidae</taxon>
        <taxon>Blaberinae</taxon>
        <taxon>Blaberus</taxon>
    </lineage>
</organism>